<accession>P46458</accession>
<feature type="signal peptide" evidence="2">
    <location>
        <begin position="1"/>
        <end position="19"/>
    </location>
</feature>
<feature type="chain" id="PRO_0000006613" description="Putative cytochrome c-type biogenesis protein CcmH">
    <location>
        <begin position="20"/>
        <end position="459"/>
    </location>
</feature>
<feature type="repeat" description="TPR 1">
    <location>
        <begin position="322"/>
        <end position="355"/>
    </location>
</feature>
<feature type="repeat" description="TPR 2">
    <location>
        <begin position="393"/>
        <end position="426"/>
    </location>
</feature>
<feature type="binding site" description="covalent" evidence="2">
    <location>
        <position position="44"/>
    </location>
    <ligand>
        <name>heme</name>
        <dbReference type="ChEBI" id="CHEBI:30413"/>
    </ligand>
</feature>
<feature type="binding site" description="covalent" evidence="2">
    <location>
        <position position="47"/>
    </location>
    <ligand>
        <name>heme</name>
        <dbReference type="ChEBI" id="CHEBI:30413"/>
    </ligand>
</feature>
<gene>
    <name type="primary">ccmH</name>
    <name type="ordered locus">HI_1096</name>
</gene>
<sequence length="459" mass="52516">MKKTWLFLTALLFSSVAFSAIDALNFSSPQQESDYHQLTQSLRCPQCQNNNIADSNATIAVDMRGKVFELLQEGKSKNDVVDYMVARYGNFVTYDPPITASTLVLWIAPLLLVLLGVVFLLRRKPKTQSAVKSQEILTDEDNARLAELLNKDKXMNFTLIFILTTLVVALICFYPLLCQFKAKHGQKRDDLNKALYFSRLEEIEQDNSQGLVENVEQLKQELQKTLLDDVPSKVQENVDYSGKSYGKIWFISGVLALGIIAGPSYFMVGSWQAESMLEQTYAKLPYFFDRMKNEDKNPFSDTEMQQFSTALRIDLQKNPTDAKKWWMLGQIGMNLGDARLAFDSYQKANKLEPDNVQYKLGYARILMFSEDATDKLKGGNLLREVIRQEHTNIEALSLLAFRYFETEDYKMAAVTWAMMLRLMPKDDERVPLIEKSIRTARDALEAQNEEKSKSITPEK</sequence>
<protein>
    <recommendedName>
        <fullName>Putative cytochrome c-type biogenesis protein CcmH</fullName>
    </recommendedName>
</protein>
<name>CCMH_HAEIN</name>
<comment type="function">
    <text evidence="1">May be required for the biogenesis of c-type cytochromes. Possible subunit of a heme lyase (By similarity).</text>
</comment>
<comment type="subcellular location">
    <subcellularLocation>
        <location evidence="3">Periplasm</location>
    </subcellularLocation>
</comment>
<comment type="similarity">
    <text evidence="3">Belongs to the CcmH/CycL/Ccl2/NrfF family.</text>
</comment>
<comment type="caution">
    <text evidence="3">Could be the product of a pseudogene.</text>
</comment>
<comment type="sequence caution" evidence="3">
    <conflict type="erroneous termination">
        <sequence resource="EMBL" id="L42023"/>
    </conflict>
    <text>Truncated C-terminus.</text>
</comment>
<organism>
    <name type="scientific">Haemophilus influenzae (strain ATCC 51907 / DSM 11121 / KW20 / Rd)</name>
    <dbReference type="NCBI Taxonomy" id="71421"/>
    <lineage>
        <taxon>Bacteria</taxon>
        <taxon>Pseudomonadati</taxon>
        <taxon>Pseudomonadota</taxon>
        <taxon>Gammaproteobacteria</taxon>
        <taxon>Pasteurellales</taxon>
        <taxon>Pasteurellaceae</taxon>
        <taxon>Haemophilus</taxon>
    </lineage>
</organism>
<evidence type="ECO:0000250" key="1"/>
<evidence type="ECO:0000255" key="2"/>
<evidence type="ECO:0000305" key="3"/>
<proteinExistence type="uncertain"/>
<reference key="1">
    <citation type="journal article" date="1995" name="Science">
        <title>Whole-genome random sequencing and assembly of Haemophilus influenzae Rd.</title>
        <authorList>
            <person name="Fleischmann R.D."/>
            <person name="Adams M.D."/>
            <person name="White O."/>
            <person name="Clayton R.A."/>
            <person name="Kirkness E.F."/>
            <person name="Kerlavage A.R."/>
            <person name="Bult C.J."/>
            <person name="Tomb J.-F."/>
            <person name="Dougherty B.A."/>
            <person name="Merrick J.M."/>
            <person name="McKenney K."/>
            <person name="Sutton G.G."/>
            <person name="FitzHugh W."/>
            <person name="Fields C.A."/>
            <person name="Gocayne J.D."/>
            <person name="Scott J.D."/>
            <person name="Shirley R."/>
            <person name="Liu L.-I."/>
            <person name="Glodek A."/>
            <person name="Kelley J.M."/>
            <person name="Weidman J.F."/>
            <person name="Phillips C.A."/>
            <person name="Spriggs T."/>
            <person name="Hedblom E."/>
            <person name="Cotton M.D."/>
            <person name="Utterback T.R."/>
            <person name="Hanna M.C."/>
            <person name="Nguyen D.T."/>
            <person name="Saudek D.M."/>
            <person name="Brandon R.C."/>
            <person name="Fine L.D."/>
            <person name="Fritchman J.L."/>
            <person name="Fuhrmann J.L."/>
            <person name="Geoghagen N.S.M."/>
            <person name="Gnehm C.L."/>
            <person name="McDonald L.A."/>
            <person name="Small K.V."/>
            <person name="Fraser C.M."/>
            <person name="Smith H.O."/>
            <person name="Venter J.C."/>
        </authorList>
    </citation>
    <scope>NUCLEOTIDE SEQUENCE [LARGE SCALE GENOMIC DNA]</scope>
    <source>
        <strain>ATCC 51907 / DSM 11121 / KW20 / Rd</strain>
    </source>
</reference>
<keyword id="KW-0201">Cytochrome c-type biogenesis</keyword>
<keyword id="KW-0349">Heme</keyword>
<keyword id="KW-0408">Iron</keyword>
<keyword id="KW-0479">Metal-binding</keyword>
<keyword id="KW-0574">Periplasm</keyword>
<keyword id="KW-1185">Reference proteome</keyword>
<keyword id="KW-0677">Repeat</keyword>
<keyword id="KW-0732">Signal</keyword>
<keyword id="KW-0802">TPR repeat</keyword>
<dbReference type="EMBL" id="L42023">
    <property type="status" value="NOT_ANNOTATED_CDS"/>
    <property type="molecule type" value="Genomic_DNA"/>
</dbReference>
<dbReference type="PhylomeDB" id="P46458"/>
<dbReference type="Proteomes" id="UP000000579">
    <property type="component" value="Chromosome"/>
</dbReference>
<dbReference type="GO" id="GO:0042597">
    <property type="term" value="C:periplasmic space"/>
    <property type="evidence" value="ECO:0007669"/>
    <property type="project" value="UniProtKB-SubCell"/>
</dbReference>
<dbReference type="GO" id="GO:0005886">
    <property type="term" value="C:plasma membrane"/>
    <property type="evidence" value="ECO:0000318"/>
    <property type="project" value="GO_Central"/>
</dbReference>
<dbReference type="GO" id="GO:0046872">
    <property type="term" value="F:metal ion binding"/>
    <property type="evidence" value="ECO:0007669"/>
    <property type="project" value="UniProtKB-KW"/>
</dbReference>
<dbReference type="GO" id="GO:0017004">
    <property type="term" value="P:cytochrome complex assembly"/>
    <property type="evidence" value="ECO:0007669"/>
    <property type="project" value="UniProtKB-KW"/>
</dbReference>
<dbReference type="CDD" id="cd16378">
    <property type="entry name" value="CcmH_N"/>
    <property type="match status" value="1"/>
</dbReference>
<dbReference type="FunFam" id="1.10.8.640:FF:000001">
    <property type="entry name" value="Cytochrome c-type biogenesis protein"/>
    <property type="match status" value="1"/>
</dbReference>
<dbReference type="Gene3D" id="1.10.8.640">
    <property type="entry name" value="Cytochrome C biogenesis protein"/>
    <property type="match status" value="1"/>
</dbReference>
<dbReference type="Gene3D" id="1.25.40.10">
    <property type="entry name" value="Tetratricopeptide repeat domain"/>
    <property type="match status" value="1"/>
</dbReference>
<dbReference type="InterPro" id="IPR051263">
    <property type="entry name" value="C-type_cytochrome_biogenesis"/>
</dbReference>
<dbReference type="InterPro" id="IPR005616">
    <property type="entry name" value="CcmH/CycL/Ccl2/NrfF_N"/>
</dbReference>
<dbReference type="InterPro" id="IPR038297">
    <property type="entry name" value="CcmH/CycL/NrfF/Ccl2_sf"/>
</dbReference>
<dbReference type="InterPro" id="IPR017560">
    <property type="entry name" value="Cyt_c_biogenesis_CcmI"/>
</dbReference>
<dbReference type="InterPro" id="IPR011990">
    <property type="entry name" value="TPR-like_helical_dom_sf"/>
</dbReference>
<dbReference type="InterPro" id="IPR056413">
    <property type="entry name" value="TPR_CcmH_CycH"/>
</dbReference>
<dbReference type="InterPro" id="IPR019734">
    <property type="entry name" value="TPR_rpt"/>
</dbReference>
<dbReference type="NCBIfam" id="TIGR03142">
    <property type="entry name" value="cytochro_ccmI"/>
    <property type="match status" value="1"/>
</dbReference>
<dbReference type="PANTHER" id="PTHR47870">
    <property type="entry name" value="CYTOCHROME C-TYPE BIOGENESIS PROTEIN CCMH"/>
    <property type="match status" value="1"/>
</dbReference>
<dbReference type="PANTHER" id="PTHR47870:SF1">
    <property type="entry name" value="CYTOCHROME C-TYPE BIOGENESIS PROTEIN CCMH"/>
    <property type="match status" value="1"/>
</dbReference>
<dbReference type="Pfam" id="PF03918">
    <property type="entry name" value="CcmH"/>
    <property type="match status" value="1"/>
</dbReference>
<dbReference type="Pfam" id="PF23914">
    <property type="entry name" value="TPR_CcmH_CycH"/>
    <property type="match status" value="1"/>
</dbReference>
<dbReference type="SUPFAM" id="SSF48452">
    <property type="entry name" value="TPR-like"/>
    <property type="match status" value="1"/>
</dbReference>
<dbReference type="PROSITE" id="PS50005">
    <property type="entry name" value="TPR"/>
    <property type="match status" value="2"/>
</dbReference>
<dbReference type="PROSITE" id="PS50293">
    <property type="entry name" value="TPR_REGION"/>
    <property type="match status" value="1"/>
</dbReference>